<reference key="1">
    <citation type="journal article" date="2006" name="J. Virol.">
        <title>Prevalence and genetic diversity of coronaviruses in bats from China.</title>
        <authorList>
            <person name="Tang X.C."/>
            <person name="Zhang J.X."/>
            <person name="Zhang S.Y."/>
            <person name="Wang P."/>
            <person name="Fan X.H."/>
            <person name="Li L.F."/>
            <person name="Li G."/>
            <person name="Dong B.Q."/>
            <person name="Liu W."/>
            <person name="Cheung C.L."/>
            <person name="Xu K.M."/>
            <person name="Song W.J."/>
            <person name="Vijaykrishna D."/>
            <person name="Poon L.L.M."/>
            <person name="Peiris J.S.M."/>
            <person name="Smith G.J."/>
            <person name="Chen H."/>
            <person name="Guan Y."/>
        </authorList>
    </citation>
    <scope>NUCLEOTIDE SEQUENCE [GENOMIC RNA]</scope>
</reference>
<name>NS3C_BC133</name>
<sequence>MSIVLRLLSVLKHQQNKMQPELSVSNYRLLDYSMEWSSSSVAALPTSSEKTVMMPAKATSSRKRHRKPKLQYAKRRFSPVNPNDLVLVRQEPTHCVRLVFPLSKRWIHFDGLVYSLARLNVSMTVDYHVTLALIHAPEAGECFGNLLHLTPLLKDCLLEFKKLCILGKTLTILASEWPFFTGVKKNKDNLTFPKAVEWLKEHGYEIYHSQLPLHMSLAKLHDLPQAQFTEAVGLCHYFDPREFALPCALEVVKIGGGKVNGRSIPLVRFPINNEFKFIPYLYQCA</sequence>
<organism>
    <name type="scientific">Bat coronavirus 133/2005</name>
    <name type="common">BtCoV</name>
    <name type="synonym">BtCoV/133/2005</name>
    <dbReference type="NCBI Taxonomy" id="389230"/>
    <lineage>
        <taxon>Viruses</taxon>
        <taxon>Riboviria</taxon>
        <taxon>Orthornavirae</taxon>
        <taxon>Pisuviricota</taxon>
        <taxon>Pisoniviricetes</taxon>
        <taxon>Nidovirales</taxon>
        <taxon>Cornidovirineae</taxon>
        <taxon>Coronaviridae</taxon>
        <taxon>Orthocoronavirinae</taxon>
        <taxon>Betacoronavirus</taxon>
        <taxon>Merbecovirus</taxon>
        <taxon>Bat coronavirus HKU4</taxon>
    </lineage>
</organism>
<accession>Q0Q4F0</accession>
<gene>
    <name type="ORF">3c</name>
</gene>
<feature type="chain" id="PRO_0000290267" description="Non-structural protein 3c">
    <location>
        <begin position="1"/>
        <end position="285"/>
    </location>
</feature>
<dbReference type="EMBL" id="DQ648794">
    <property type="protein sequence ID" value="ABG47054.1"/>
    <property type="molecule type" value="Genomic_RNA"/>
</dbReference>
<dbReference type="Proteomes" id="UP000007449">
    <property type="component" value="Genome"/>
</dbReference>
<dbReference type="CDD" id="cd21652">
    <property type="entry name" value="ORF4b_HKU4-CoV"/>
    <property type="match status" value="1"/>
</dbReference>
<dbReference type="InterPro" id="IPR044319">
    <property type="entry name" value="ORF4b_HKU4-CoV"/>
</dbReference>
<proteinExistence type="predicted"/>
<organismHost>
    <name type="scientific">Tylonycteris pachypus</name>
    <name type="common">Lesser bamboo bat</name>
    <name type="synonym">Vespertilio pachypus</name>
    <dbReference type="NCBI Taxonomy" id="258959"/>
</organismHost>
<protein>
    <recommendedName>
        <fullName>Non-structural protein 3c</fullName>
        <shortName>ns3c</shortName>
    </recommendedName>
    <alternativeName>
        <fullName>Accessory protein 3c</fullName>
    </alternativeName>
</protein>